<reference key="1">
    <citation type="journal article" date="2008" name="PLoS Genet.">
        <title>Genomic islands in the pathogenic filamentous fungus Aspergillus fumigatus.</title>
        <authorList>
            <person name="Fedorova N.D."/>
            <person name="Khaldi N."/>
            <person name="Joardar V.S."/>
            <person name="Maiti R."/>
            <person name="Amedeo P."/>
            <person name="Anderson M.J."/>
            <person name="Crabtree J."/>
            <person name="Silva J.C."/>
            <person name="Badger J.H."/>
            <person name="Albarraq A."/>
            <person name="Angiuoli S."/>
            <person name="Bussey H."/>
            <person name="Bowyer P."/>
            <person name="Cotty P.J."/>
            <person name="Dyer P.S."/>
            <person name="Egan A."/>
            <person name="Galens K."/>
            <person name="Fraser-Liggett C.M."/>
            <person name="Haas B.J."/>
            <person name="Inman J.M."/>
            <person name="Kent R."/>
            <person name="Lemieux S."/>
            <person name="Malavazi I."/>
            <person name="Orvis J."/>
            <person name="Roemer T."/>
            <person name="Ronning C.M."/>
            <person name="Sundaram J.P."/>
            <person name="Sutton G."/>
            <person name="Turner G."/>
            <person name="Venter J.C."/>
            <person name="White O.R."/>
            <person name="Whitty B.R."/>
            <person name="Youngman P."/>
            <person name="Wolfe K.H."/>
            <person name="Goldman G.H."/>
            <person name="Wortman J.R."/>
            <person name="Jiang B."/>
            <person name="Denning D.W."/>
            <person name="Nierman W.C."/>
        </authorList>
    </citation>
    <scope>NUCLEOTIDE SEQUENCE [LARGE SCALE GENOMIC DNA]</scope>
    <source>
        <strain>CBS 144.89 / FGSC A1163 / CEA10</strain>
    </source>
</reference>
<reference key="2">
    <citation type="journal article" date="2019" name="Org. Lett.">
        <title>Characterization and Biosynthesis of a Rare Fungal Hopane-Type Triterpenoid Glycoside Involved in the Antistress Property of Aspergillus fumigatus.</title>
        <authorList>
            <person name="Ma K."/>
            <person name="Zhang P."/>
            <person name="Tao Q."/>
            <person name="Keller N.P."/>
            <person name="Yang Y."/>
            <person name="Yin W.B."/>
            <person name="Liu H."/>
        </authorList>
    </citation>
    <scope>FUNCTION</scope>
    <scope>DISRUPTION PHENOTYPE</scope>
    <scope>CATALYTIC ACTIVITY</scope>
    <scope>SUBSTRATE SPECIFICITY</scope>
    <scope>BIOPHYSICOCHEMICAL PROPERTIES</scope>
    <scope>ACTIVITY REGULATION</scope>
    <scope>PATHWAY</scope>
</reference>
<organism>
    <name type="scientific">Aspergillus fumigatus (strain CBS 144.89 / FGSC A1163 / CEA10)</name>
    <name type="common">Neosartorya fumigata</name>
    <dbReference type="NCBI Taxonomy" id="451804"/>
    <lineage>
        <taxon>Eukaryota</taxon>
        <taxon>Fungi</taxon>
        <taxon>Dikarya</taxon>
        <taxon>Ascomycota</taxon>
        <taxon>Pezizomycotina</taxon>
        <taxon>Eurotiomycetes</taxon>
        <taxon>Eurotiomycetidae</taxon>
        <taxon>Eurotiales</taxon>
        <taxon>Aspergillaceae</taxon>
        <taxon>Aspergillus</taxon>
        <taxon>Aspergillus subgen. Fumigati</taxon>
    </lineage>
</organism>
<dbReference type="EC" id="2.4.1.-" evidence="1"/>
<dbReference type="EMBL" id="DS499598">
    <property type="protein sequence ID" value="EDP50816.1"/>
    <property type="molecule type" value="Genomic_DNA"/>
</dbReference>
<dbReference type="EnsemblFungi" id="EDP50816">
    <property type="protein sequence ID" value="EDP50816"/>
    <property type="gene ID" value="AFUB_071569"/>
</dbReference>
<dbReference type="VEuPathDB" id="FungiDB:AFUB_071569"/>
<dbReference type="HOGENOM" id="CLU_061936_0_0_1"/>
<dbReference type="OrthoDB" id="131031at5052"/>
<dbReference type="Proteomes" id="UP000001699">
    <property type="component" value="Unassembled WGS sequence"/>
</dbReference>
<dbReference type="GO" id="GO:0016757">
    <property type="term" value="F:glycosyltransferase activity"/>
    <property type="evidence" value="ECO:0007669"/>
    <property type="project" value="UniProtKB-KW"/>
</dbReference>
<dbReference type="Gene3D" id="3.90.550.20">
    <property type="match status" value="1"/>
</dbReference>
<dbReference type="InterPro" id="IPR008441">
    <property type="entry name" value="AfumC-like_glycosyl_Trfase"/>
</dbReference>
<dbReference type="InterPro" id="IPR029044">
    <property type="entry name" value="Nucleotide-diphossugar_trans"/>
</dbReference>
<dbReference type="Pfam" id="PF05704">
    <property type="entry name" value="Caps_synth"/>
    <property type="match status" value="1"/>
</dbReference>
<dbReference type="SUPFAM" id="SSF53448">
    <property type="entry name" value="Nucleotide-diphospho-sugar transferases"/>
    <property type="match status" value="1"/>
</dbReference>
<protein>
    <recommendedName>
        <fullName evidence="2">Glycosyltransferase afumC</fullName>
        <ecNumber evidence="1">2.4.1.-</ecNumber>
    </recommendedName>
    <alternativeName>
        <fullName evidence="2">Fumihopaside A biosynthesis cluster protein C</fullName>
    </alternativeName>
</protein>
<accession>B0Y567</accession>
<proteinExistence type="evidence at protein level"/>
<sequence length="391" mass="44642">MAIPTKERGSRLTDADILSDLQMYKPVTDSDTRNVWAFWDKGLSNSPAWNQRNVISWVRRLSPKWTVRVLDLVEGSPNHVSQFIPREMLTDVFWNRTMTGPHVGQHSSDLIRLPLLYLYGGVWLDVGMLLFRSLDALCWNALEDPETPYEVAAFKVSMGPELSFLFNGFIAARRGSVCIKYWHEIFRTLWDGATSCAGMHSHPLLAHLPVYEPPSLNGKRPPFMYAQFADYLAQVFCLERLRHLVDSKTGWDGPKFFEEKVLLFDCVTEAYWAQRLTDWNGRKQYELLDLQRGEDGLDNARVKEAEALVQGVLSMSSTMKLSHGLVTAGREYLADIWDSPKNHDADIRPGTFAAYLREASETFEQTKELVPLRMPVIEKALLRAGVTEVVR</sequence>
<gene>
    <name evidence="2" type="primary">afumC</name>
    <name type="ORF">AFUB_071569</name>
</gene>
<evidence type="ECO:0000269" key="1">
    <source>
    </source>
</evidence>
<evidence type="ECO:0000303" key="2">
    <source>
    </source>
</evidence>
<evidence type="ECO:0000305" key="3"/>
<feature type="chain" id="PRO_0000452740" description="Glycosyltransferase afumC">
    <location>
        <begin position="1"/>
        <end position="391"/>
    </location>
</feature>
<keyword id="KW-0328">Glycosyltransferase</keyword>
<keyword id="KW-0808">Transferase</keyword>
<comment type="function">
    <text evidence="1">Glycosyltransferase; part of the gene cluster that mediates the biosynthesis fumihopaside A, a hopane-type glucoside that enhances the thermotolerance and UV resistance of N.fumigata (PubMed:30977375). The first step of fumihopaside A biosynthesis is performed by the squalene hopane cyclase afumA that catalyzes the cyclization of 3S-oxidosqualene into the hopene 21-beta-H-hopane-3-beta,22-diol (PubMed:30977375). The cytochrome P450 monooxygenase afumB is responsible for both hydroxylation at C-24 and oxidations at C-30 of the afumA product (PubMed:30977375). The glycosyltransferase afumC then catalyzes the glycosylation at C-24, using UDP-D-glucose as a donor, to produce fumihopaside A (PubMed:30977375). AfumC is also able to accept UDP-D-galactose and UDP-D-glucuronic acid as donors to yield minor derivatives (PubMed:30977375). Fumihopaside B, another minor derivative produced, is different from fumihopaside A due to the presence of a double bond between C-22 and C-29 (PubMed:30977375).</text>
</comment>
<comment type="activity regulation">
    <text evidence="1">Activity is significantly decreased by addition of divalent cations such as Mg(2+), Mn(2+), Zn(2+), Ca(2+), Co(2+), Cu(2+), and Ni(2+); while Fe(2+) has little effect.</text>
</comment>
<comment type="biophysicochemical properties">
    <kinetics>
        <KM evidence="1">0.33 mM for the aglycone intermediate (in presence of UDP-D-glucose)</KM>
    </kinetics>
    <phDependence>
        <text evidence="1">Optimum pH is 8.0.</text>
    </phDependence>
    <temperatureDependence>
        <text evidence="1">Optimum temperature is 37 degrees Celsius.</text>
    </temperatureDependence>
</comment>
<comment type="pathway">
    <text evidence="1">Secondary metabolite biosynthesis.</text>
</comment>
<comment type="disruption phenotype">
    <text evidence="1">Failed to produce fumihopaside A, but leads to the accumulation of the aglycone intermediate.</text>
</comment>
<comment type="similarity">
    <text evidence="3">Belongs to the afumC glycosyltransferase family.</text>
</comment>
<name>AFUMC_ASPFC</name>